<comment type="similarity">
    <text evidence="1">Belongs to the UPF0434 family.</text>
</comment>
<reference key="1">
    <citation type="journal article" date="2005" name="Genome Res.">
        <title>Coping with cold: the genome of the versatile marine Antarctica bacterium Pseudoalteromonas haloplanktis TAC125.</title>
        <authorList>
            <person name="Medigue C."/>
            <person name="Krin E."/>
            <person name="Pascal G."/>
            <person name="Barbe V."/>
            <person name="Bernsel A."/>
            <person name="Bertin P.N."/>
            <person name="Cheung F."/>
            <person name="Cruveiller S."/>
            <person name="D'Amico S."/>
            <person name="Duilio A."/>
            <person name="Fang G."/>
            <person name="Feller G."/>
            <person name="Ho C."/>
            <person name="Mangenot S."/>
            <person name="Marino G."/>
            <person name="Nilsson J."/>
            <person name="Parrilli E."/>
            <person name="Rocha E.P.C."/>
            <person name="Rouy Z."/>
            <person name="Sekowska A."/>
            <person name="Tutino M.L."/>
            <person name="Vallenet D."/>
            <person name="von Heijne G."/>
            <person name="Danchin A."/>
        </authorList>
    </citation>
    <scope>NUCLEOTIDE SEQUENCE [LARGE SCALE GENOMIC DNA]</scope>
    <source>
        <strain>TAC 125</strain>
    </source>
</reference>
<feature type="chain" id="PRO_0000291130" description="UPF0434 protein PSHAa1659">
    <location>
        <begin position="1"/>
        <end position="65"/>
    </location>
</feature>
<dbReference type="EMBL" id="CR954246">
    <property type="protein sequence ID" value="CAI86732.1"/>
    <property type="molecule type" value="Genomic_DNA"/>
</dbReference>
<dbReference type="SMR" id="Q3IGX7"/>
<dbReference type="STRING" id="326442.PSHAa1659"/>
<dbReference type="KEGG" id="pha:PSHAa1659"/>
<dbReference type="eggNOG" id="COG2835">
    <property type="taxonomic scope" value="Bacteria"/>
</dbReference>
<dbReference type="HOGENOM" id="CLU_155659_3_1_6"/>
<dbReference type="BioCyc" id="PHAL326442:PSHA_RS08130-MONOMER"/>
<dbReference type="Proteomes" id="UP000006843">
    <property type="component" value="Chromosome I"/>
</dbReference>
<dbReference type="GO" id="GO:0005829">
    <property type="term" value="C:cytosol"/>
    <property type="evidence" value="ECO:0007669"/>
    <property type="project" value="TreeGrafter"/>
</dbReference>
<dbReference type="FunFam" id="2.20.25.10:FF:000002">
    <property type="entry name" value="UPF0434 protein YcaR"/>
    <property type="match status" value="1"/>
</dbReference>
<dbReference type="Gene3D" id="2.20.25.10">
    <property type="match status" value="1"/>
</dbReference>
<dbReference type="HAMAP" id="MF_01187">
    <property type="entry name" value="UPF0434"/>
    <property type="match status" value="1"/>
</dbReference>
<dbReference type="InterPro" id="IPR005651">
    <property type="entry name" value="Trm112-like"/>
</dbReference>
<dbReference type="PANTHER" id="PTHR33505:SF4">
    <property type="entry name" value="PROTEIN PREY, MITOCHONDRIAL"/>
    <property type="match status" value="1"/>
</dbReference>
<dbReference type="PANTHER" id="PTHR33505">
    <property type="entry name" value="ZGC:162634"/>
    <property type="match status" value="1"/>
</dbReference>
<dbReference type="Pfam" id="PF03966">
    <property type="entry name" value="Trm112p"/>
    <property type="match status" value="1"/>
</dbReference>
<dbReference type="SUPFAM" id="SSF158997">
    <property type="entry name" value="Trm112p-like"/>
    <property type="match status" value="1"/>
</dbReference>
<sequence length="65" mass="7337">MAFDTKLLEIIACPVCKGKLRFDKENSELISTAAKLAYPVIDDIPVLLENEARELSLDEVQKWNS</sequence>
<evidence type="ECO:0000255" key="1">
    <source>
        <dbReference type="HAMAP-Rule" id="MF_01187"/>
    </source>
</evidence>
<protein>
    <recommendedName>
        <fullName evidence="1">UPF0434 protein PSHAa1659</fullName>
    </recommendedName>
</protein>
<proteinExistence type="inferred from homology"/>
<organism>
    <name type="scientific">Pseudoalteromonas translucida (strain TAC 125)</name>
    <dbReference type="NCBI Taxonomy" id="326442"/>
    <lineage>
        <taxon>Bacteria</taxon>
        <taxon>Pseudomonadati</taxon>
        <taxon>Pseudomonadota</taxon>
        <taxon>Gammaproteobacteria</taxon>
        <taxon>Alteromonadales</taxon>
        <taxon>Pseudoalteromonadaceae</taxon>
        <taxon>Pseudoalteromonas</taxon>
    </lineage>
</organism>
<gene>
    <name type="ordered locus">PSHAa1659</name>
</gene>
<accession>Q3IGX7</accession>
<name>Y1659_PSET1</name>
<keyword id="KW-1185">Reference proteome</keyword>